<gene>
    <name type="primary">EXG1</name>
</gene>
<reference key="1">
    <citation type="journal article" date="1994" name="Appl. Environ. Microbiol.">
        <title>Cloning and targeted gene disruption of EXG1, encoding exo-beta 1, 3-glucanase, in the phytopathogenic fungus Cochliobolus carbonum.</title>
        <authorList>
            <person name="Schaeffer H.J."/>
            <person name="Leykam J."/>
            <person name="Walton J.D."/>
        </authorList>
    </citation>
    <scope>NUCLEOTIDE SEQUENCE [GENOMIC DNA]</scope>
    <source>
        <strain>ATCC 90305 / SB111 / 2R15</strain>
    </source>
</reference>
<reference key="2">
    <citation type="journal article" date="1991" name="Physiol. Mol. Plant Pathol.">
        <title>A single beta 1,3-glucanase secreted by the maize pathogen Cochliobolus carbonum acts by an exolytic mechanism.</title>
        <authorList>
            <person name="van Hoof A."/>
            <person name="Leykam J."/>
            <person name="Schaeffer H.J."/>
            <person name="Walton J.D."/>
        </authorList>
        <dbReference type="AGRICOLA" id="IND92032302"/>
    </citation>
    <scope>PARTIAL PROTEIN SEQUENCE</scope>
</reference>
<proteinExistence type="evidence at protein level"/>
<evidence type="ECO:0000255" key="1"/>
<evidence type="ECO:0000305" key="2"/>
<dbReference type="EC" id="3.2.1.58"/>
<dbReference type="EMBL" id="L48994">
    <property type="protein sequence ID" value="AAC71062.1"/>
    <property type="molecule type" value="Genomic_DNA"/>
</dbReference>
<dbReference type="SMR" id="P49426"/>
<dbReference type="CAZy" id="GH55">
    <property type="family name" value="Glycoside Hydrolase Family 55"/>
</dbReference>
<dbReference type="GlyCosmos" id="P49426">
    <property type="glycosylation" value="4 sites, No reported glycans"/>
</dbReference>
<dbReference type="BRENDA" id="3.2.1.58">
    <property type="organism ID" value="1551"/>
</dbReference>
<dbReference type="GO" id="GO:0004338">
    <property type="term" value="F:glucan exo-1,3-beta-glucosidase activity"/>
    <property type="evidence" value="ECO:0007669"/>
    <property type="project" value="UniProtKB-EC"/>
</dbReference>
<dbReference type="GO" id="GO:0004650">
    <property type="term" value="F:polygalacturonase activity"/>
    <property type="evidence" value="ECO:0007669"/>
    <property type="project" value="InterPro"/>
</dbReference>
<dbReference type="GO" id="GO:0071555">
    <property type="term" value="P:cell wall organization"/>
    <property type="evidence" value="ECO:0007669"/>
    <property type="project" value="UniProtKB-KW"/>
</dbReference>
<dbReference type="CDD" id="cd23668">
    <property type="entry name" value="GH55_beta13glucanase-like"/>
    <property type="match status" value="1"/>
</dbReference>
<dbReference type="Gene3D" id="2.160.20.10">
    <property type="entry name" value="Single-stranded right-handed beta-helix, Pectin lyase-like"/>
    <property type="match status" value="2"/>
</dbReference>
<dbReference type="InterPro" id="IPR012334">
    <property type="entry name" value="Pectin_lyas_fold"/>
</dbReference>
<dbReference type="InterPro" id="IPR011050">
    <property type="entry name" value="Pectin_lyase_fold/virulence"/>
</dbReference>
<dbReference type="InterPro" id="IPR039279">
    <property type="entry name" value="QRT3-like"/>
</dbReference>
<dbReference type="InterPro" id="IPR024535">
    <property type="entry name" value="RHGA/B-epi-like_pectate_lyase"/>
</dbReference>
<dbReference type="InterPro" id="IPR001763">
    <property type="entry name" value="Rhodanese-like_dom"/>
</dbReference>
<dbReference type="PANTHER" id="PTHR33928:SF2">
    <property type="entry name" value="PECTATE LYASE SUPERFAMILY PROTEIN DOMAIN-CONTAINING PROTEIN-RELATED"/>
    <property type="match status" value="1"/>
</dbReference>
<dbReference type="PANTHER" id="PTHR33928">
    <property type="entry name" value="POLYGALACTURONASE QRT3"/>
    <property type="match status" value="1"/>
</dbReference>
<dbReference type="Pfam" id="PF12708">
    <property type="entry name" value="Pect-lyase_RHGA_epim"/>
    <property type="match status" value="2"/>
</dbReference>
<dbReference type="SUPFAM" id="SSF51126">
    <property type="entry name" value="Pectin lyase-like"/>
    <property type="match status" value="2"/>
</dbReference>
<keyword id="KW-0961">Cell wall biogenesis/degradation</keyword>
<keyword id="KW-0903">Direct protein sequencing</keyword>
<keyword id="KW-0325">Glycoprotein</keyword>
<keyword id="KW-0326">Glycosidase</keyword>
<keyword id="KW-0378">Hydrolase</keyword>
<keyword id="KW-0732">Signal</keyword>
<protein>
    <recommendedName>
        <fullName>Glucan 1,3-beta-glucosidase</fullName>
        <ecNumber>3.2.1.58</ecNumber>
    </recommendedName>
    <alternativeName>
        <fullName>1,3-beta-D-glucanohydrolase</fullName>
    </alternativeName>
    <alternativeName>
        <fullName>Exo-beta 1,3 glucanase</fullName>
    </alternativeName>
</protein>
<sequence>MRFSSLLACLGAVGIQAAAIPFQRRVDNTTDSGSLDAAQAAAAIVDGYWLNDLSGKGRAPFNSNPNYKVFRNVKDYGAKGDGVTDDSDAFNRAISDGSRCGPWVCDSSTDSPAVVYVPSGTYLINKPIIFYYMTALIGNPRELPVLKAASSLQALALIDGSPYSNQNGEPGWISTNLFLRQIRNLIIDGTAVAPTSGFQAIHWPASQATTIQNVKIRMTQASNSVHAGIFVENGSGGHMADLDITGGLYGMNIGNQQFTMRNVKISKAVVGISQIWNWGWLYSGLQISDCGTAFSMVNGGSAGKQEVGSAVIIDSEITNCQKFVDSAWSQTSNPTGSGQLVIENIKLTNVPAAVVSNGATVLAGGSLTIQTWGQGNKYAPNASGPSKFQGAISGATRPTGLLQNGKFYSKSKPQYETLSTSSFISARGAGATGDGVTDDTRAVQAAVTQAASQNKVLFFEHGVYKVTNTIYVPPGSRMVGEIFSAIMGSGSTFGDQANPVPIIQIGKPGESGSIEWSDMIVQTQGATPGAIVIQYNLNTALGSGLWDVHTRIGGAKGTNLQVAQCPAVLGQVKPECFSAHTNVHVTKGANGAYFENNWFWTADHDLDDADSTRINIYTGRGFHVEANNVWIWANGAEHHTMYQYQFNAAQDIFAGYIQTETPYFQPTPIAPLPYVSSSKYSDPVYSSSQTSAWGLRLLDAKNVLIYGGGLYSFFDNYDVGCSSPTAPNGFRDCQTRILSIEGSTSVQAFGFSEVGVEWMVTAAGQDKANWKDNLSVYPTTIGYLSYGF</sequence>
<accession>P49426</accession>
<feature type="signal peptide">
    <location>
        <begin position="1"/>
        <end position="42"/>
    </location>
</feature>
<feature type="chain" id="PRO_0000012226" description="Glucan 1,3-beta-glucosidase">
    <location>
        <begin position="43"/>
        <end position="788"/>
    </location>
</feature>
<feature type="glycosylation site" description="N-linked (GlcNAc...) asparagine" evidence="1">
    <location>
        <position position="28"/>
    </location>
</feature>
<feature type="glycosylation site" description="N-linked (GlcNAc...) asparagine" evidence="1">
    <location>
        <position position="233"/>
    </location>
</feature>
<feature type="glycosylation site" description="N-linked (GlcNAc...) asparagine" evidence="1">
    <location>
        <position position="381"/>
    </location>
</feature>
<feature type="glycosylation site" description="N-linked (GlcNAc...) asparagine" evidence="1">
    <location>
        <position position="773"/>
    </location>
</feature>
<comment type="catalytic activity">
    <reaction>
        <text>Successive hydrolysis of beta-D-glucose units from the non-reducing ends of (1-&gt;3)-beta-D-glucans, releasing alpha-glucose.</text>
        <dbReference type="EC" id="3.2.1.58"/>
    </reaction>
</comment>
<comment type="similarity">
    <text evidence="2">Belongs to the glycosyl hydrolase 55 family.</text>
</comment>
<name>EXG1_COCCA</name>
<organism>
    <name type="scientific">Cochliobolus carbonum</name>
    <name type="common">Maize leaf spot fungus</name>
    <name type="synonym">Bipolaris zeicola</name>
    <dbReference type="NCBI Taxonomy" id="5017"/>
    <lineage>
        <taxon>Eukaryota</taxon>
        <taxon>Fungi</taxon>
        <taxon>Dikarya</taxon>
        <taxon>Ascomycota</taxon>
        <taxon>Pezizomycotina</taxon>
        <taxon>Dothideomycetes</taxon>
        <taxon>Pleosporomycetidae</taxon>
        <taxon>Pleosporales</taxon>
        <taxon>Pleosporineae</taxon>
        <taxon>Pleosporaceae</taxon>
        <taxon>Bipolaris</taxon>
    </lineage>
</organism>